<comment type="function">
    <text evidence="1">Cell division protein that is part of the divisome complex and is recruited early to the Z-ring. Probably stimulates Z-ring formation, perhaps through the cross-linking of FtsZ protofilaments. Its function overlaps with FtsA.</text>
</comment>
<comment type="subunit">
    <text evidence="1">Homodimer. Interacts with FtsZ.</text>
</comment>
<comment type="subcellular location">
    <subcellularLocation>
        <location evidence="1">Cytoplasm</location>
    </subcellularLocation>
    <text evidence="1">Localizes to the division site, in a FtsZ-dependent manner.</text>
</comment>
<comment type="similarity">
    <text evidence="1">Belongs to the SepF family.</text>
</comment>
<feature type="chain" id="PRO_0000334059" description="Cell division protein SepF">
    <location>
        <begin position="1"/>
        <end position="191"/>
    </location>
</feature>
<feature type="region of interest" description="Disordered" evidence="2">
    <location>
        <begin position="151"/>
        <end position="191"/>
    </location>
</feature>
<feature type="compositionally biased region" description="Low complexity" evidence="2">
    <location>
        <begin position="151"/>
        <end position="164"/>
    </location>
</feature>
<feature type="compositionally biased region" description="Polar residues" evidence="2">
    <location>
        <begin position="165"/>
        <end position="178"/>
    </location>
</feature>
<keyword id="KW-0131">Cell cycle</keyword>
<keyword id="KW-0132">Cell division</keyword>
<keyword id="KW-0963">Cytoplasm</keyword>
<keyword id="KW-1185">Reference proteome</keyword>
<keyword id="KW-0717">Septation</keyword>
<proteinExistence type="inferred from homology"/>
<protein>
    <recommendedName>
        <fullName evidence="1">Cell division protein SepF</fullName>
    </recommendedName>
</protein>
<reference key="1">
    <citation type="journal article" date="2007" name="PLoS Genet.">
        <title>Patterns and implications of gene gain and loss in the evolution of Prochlorococcus.</title>
        <authorList>
            <person name="Kettler G.C."/>
            <person name="Martiny A.C."/>
            <person name="Huang K."/>
            <person name="Zucker J."/>
            <person name="Coleman M.L."/>
            <person name="Rodrigue S."/>
            <person name="Chen F."/>
            <person name="Lapidus A."/>
            <person name="Ferriera S."/>
            <person name="Johnson J."/>
            <person name="Steglich C."/>
            <person name="Church G.M."/>
            <person name="Richardson P."/>
            <person name="Chisholm S.W."/>
        </authorList>
    </citation>
    <scope>NUCLEOTIDE SEQUENCE [LARGE SCALE GENOMIC DNA]</scope>
    <source>
        <strain>MIT 9301</strain>
    </source>
</reference>
<sequence>MSLISRLKAVVAGDEYLEDDFDELDYASEDELNDINNFKQNPKNANALANSNPFDFMNNNRSSKVVGMPGISNSSSEVSLMEPRSFDEMPQAIQALRERKTVILNLTMMDPDQAQRAVDFIAGGTYAIDGHQERVGESIFLFAPSCVNVTSSSPEEASPSSVSTEKTPQYSLGKNTTPEPAWGNSKLSAYS</sequence>
<name>SEPF_PROM0</name>
<dbReference type="EMBL" id="CP000576">
    <property type="protein sequence ID" value="ABO17038.1"/>
    <property type="molecule type" value="Genomic_DNA"/>
</dbReference>
<dbReference type="RefSeq" id="WP_011862420.1">
    <property type="nucleotide sequence ID" value="NC_009091.1"/>
</dbReference>
<dbReference type="SMR" id="A3PBB3"/>
<dbReference type="STRING" id="167546.P9301_04151"/>
<dbReference type="KEGG" id="pmg:P9301_04151"/>
<dbReference type="eggNOG" id="COG1799">
    <property type="taxonomic scope" value="Bacteria"/>
</dbReference>
<dbReference type="HOGENOM" id="CLU_078499_1_0_3"/>
<dbReference type="OrthoDB" id="9815206at2"/>
<dbReference type="Proteomes" id="UP000001430">
    <property type="component" value="Chromosome"/>
</dbReference>
<dbReference type="GO" id="GO:0005737">
    <property type="term" value="C:cytoplasm"/>
    <property type="evidence" value="ECO:0007669"/>
    <property type="project" value="UniProtKB-SubCell"/>
</dbReference>
<dbReference type="GO" id="GO:0000917">
    <property type="term" value="P:division septum assembly"/>
    <property type="evidence" value="ECO:0007669"/>
    <property type="project" value="UniProtKB-KW"/>
</dbReference>
<dbReference type="GO" id="GO:0043093">
    <property type="term" value="P:FtsZ-dependent cytokinesis"/>
    <property type="evidence" value="ECO:0007669"/>
    <property type="project" value="UniProtKB-UniRule"/>
</dbReference>
<dbReference type="Gene3D" id="3.30.110.150">
    <property type="entry name" value="SepF-like protein"/>
    <property type="match status" value="1"/>
</dbReference>
<dbReference type="HAMAP" id="MF_01197">
    <property type="entry name" value="SepF"/>
    <property type="match status" value="1"/>
</dbReference>
<dbReference type="InterPro" id="IPR023052">
    <property type="entry name" value="Cell_div_SepF"/>
</dbReference>
<dbReference type="InterPro" id="IPR007561">
    <property type="entry name" value="Cell_div_SepF/SepF-rel"/>
</dbReference>
<dbReference type="InterPro" id="IPR038594">
    <property type="entry name" value="SepF-like_sf"/>
</dbReference>
<dbReference type="PANTHER" id="PTHR35798">
    <property type="entry name" value="CELL DIVISION PROTEIN SEPF"/>
    <property type="match status" value="1"/>
</dbReference>
<dbReference type="PANTHER" id="PTHR35798:SF1">
    <property type="entry name" value="CELL DIVISION PROTEIN SEPF"/>
    <property type="match status" value="1"/>
</dbReference>
<dbReference type="Pfam" id="PF04472">
    <property type="entry name" value="SepF"/>
    <property type="match status" value="1"/>
</dbReference>
<evidence type="ECO:0000255" key="1">
    <source>
        <dbReference type="HAMAP-Rule" id="MF_01197"/>
    </source>
</evidence>
<evidence type="ECO:0000256" key="2">
    <source>
        <dbReference type="SAM" id="MobiDB-lite"/>
    </source>
</evidence>
<organism>
    <name type="scientific">Prochlorococcus marinus (strain MIT 9301)</name>
    <dbReference type="NCBI Taxonomy" id="167546"/>
    <lineage>
        <taxon>Bacteria</taxon>
        <taxon>Bacillati</taxon>
        <taxon>Cyanobacteriota</taxon>
        <taxon>Cyanophyceae</taxon>
        <taxon>Synechococcales</taxon>
        <taxon>Prochlorococcaceae</taxon>
        <taxon>Prochlorococcus</taxon>
    </lineage>
</organism>
<gene>
    <name evidence="1" type="primary">sepF</name>
    <name type="ordered locus">P9301_04151</name>
</gene>
<accession>A3PBB3</accession>